<protein>
    <recommendedName>
        <fullName>Tropomyosin</fullName>
    </recommendedName>
</protein>
<feature type="chain" id="PRO_0000205690" description="Tropomyosin">
    <location>
        <begin position="1"/>
        <end position="284"/>
    </location>
</feature>
<feature type="coiled-coil region" evidence="1">
    <location>
        <begin position="1"/>
        <end position="284"/>
    </location>
</feature>
<sequence>MDAIKKKMQAMKLEKDNAMDRALLCEQQARDANLRAEKAEEEARSLQKKIQQIENDLDQTMEQLMQVNAKLDEKDKALQNAESEVAALNRRIQLLEEDLERSEERLATATAKLAEASQAADESERARKILESKGLADEERMDALENQLKEARFMAEEADKKYDEVARKLAMVEADLERAEERAESGESKIVELEEELRVVGNNLKSLEVSEEKANLREEAYKQQIKTLTTRLKEAEARAEFAERSVQKLQKEVDRLEDELVHEKEKYKFICDDLDMTFTELIGN</sequence>
<accession>Q8T6L5</accession>
<comment type="function">
    <text>Tropomyosin, in association with the troponin complex, plays a central role in the calcium dependent regulation of muscle contraction.</text>
</comment>
<comment type="subunit">
    <text evidence="1">Homodimer.</text>
</comment>
<comment type="domain">
    <text>The molecule is in a coiled coil structure that is formed by 2 polypeptide chains. The sequence exhibits a prominent seven-residues periodicity.</text>
</comment>
<comment type="similarity">
    <text evidence="2">Belongs to the tropomyosin family.</text>
</comment>
<reference key="1">
    <citation type="submission" date="2001-12" db="EMBL/GenBank/DDBJ databases">
        <title>cDNA sequence encoding dusky-brown cockroach tropomyosin.</title>
        <authorList>
            <person name="Jeong K.Y."/>
            <person name="Hwang H."/>
            <person name="Yong T.-S."/>
        </authorList>
    </citation>
    <scope>NUCLEOTIDE SEQUENCE [MRNA]</scope>
</reference>
<evidence type="ECO:0000250" key="1"/>
<evidence type="ECO:0000305" key="2"/>
<keyword id="KW-0175">Coiled coil</keyword>
<keyword id="KW-0677">Repeat</keyword>
<organism>
    <name type="scientific">Periplaneta fuliginosa</name>
    <name type="common">Smokybrown cockroach</name>
    <name type="synonym">Dusky-brown cockroach</name>
    <dbReference type="NCBI Taxonomy" id="36977"/>
    <lineage>
        <taxon>Eukaryota</taxon>
        <taxon>Metazoa</taxon>
        <taxon>Ecdysozoa</taxon>
        <taxon>Arthropoda</taxon>
        <taxon>Hexapoda</taxon>
        <taxon>Insecta</taxon>
        <taxon>Pterygota</taxon>
        <taxon>Neoptera</taxon>
        <taxon>Polyneoptera</taxon>
        <taxon>Dictyoptera</taxon>
        <taxon>Blattodea</taxon>
        <taxon>Blattoidea</taxon>
        <taxon>Blattidae</taxon>
        <taxon>Blattinae</taxon>
        <taxon>Periplaneta</taxon>
    </lineage>
</organism>
<name>TPM_PERFU</name>
<dbReference type="EMBL" id="AF454866">
    <property type="protein sequence ID" value="AAL86701.1"/>
    <property type="molecule type" value="mRNA"/>
</dbReference>
<dbReference type="SMR" id="Q8T6L5"/>
<dbReference type="Allergome" id="1516">
    <property type="allergen name" value="Per f 7"/>
</dbReference>
<dbReference type="Allergome" id="4078">
    <property type="allergen name" value="Per f 7.0101"/>
</dbReference>
<dbReference type="FunFam" id="1.20.5.170:FF:000005">
    <property type="entry name" value="Tropomyosin alpha-1 chain"/>
    <property type="match status" value="1"/>
</dbReference>
<dbReference type="FunFam" id="1.20.5.170:FF:000001">
    <property type="entry name" value="Tropomyosin alpha-1 chain isoform 1"/>
    <property type="match status" value="1"/>
</dbReference>
<dbReference type="FunFam" id="1.20.5.340:FF:000001">
    <property type="entry name" value="Tropomyosin alpha-1 chain isoform 2"/>
    <property type="match status" value="1"/>
</dbReference>
<dbReference type="Gene3D" id="1.20.5.170">
    <property type="match status" value="2"/>
</dbReference>
<dbReference type="Gene3D" id="1.20.5.340">
    <property type="match status" value="1"/>
</dbReference>
<dbReference type="InterPro" id="IPR000533">
    <property type="entry name" value="Tropomyosin"/>
</dbReference>
<dbReference type="PANTHER" id="PTHR19269">
    <property type="entry name" value="TROPOMYOSIN"/>
    <property type="match status" value="1"/>
</dbReference>
<dbReference type="Pfam" id="PF00261">
    <property type="entry name" value="Tropomyosin"/>
    <property type="match status" value="1"/>
</dbReference>
<dbReference type="PRINTS" id="PR00194">
    <property type="entry name" value="TROPOMYOSIN"/>
</dbReference>
<dbReference type="SUPFAM" id="SSF57997">
    <property type="entry name" value="Tropomyosin"/>
    <property type="match status" value="1"/>
</dbReference>
<dbReference type="PROSITE" id="PS00326">
    <property type="entry name" value="TROPOMYOSIN"/>
    <property type="match status" value="1"/>
</dbReference>
<proteinExistence type="evidence at transcript level"/>